<keyword id="KW-0002">3D-structure</keyword>
<keyword id="KW-0148">Chlorophyll</keyword>
<keyword id="KW-0150">Chloroplast</keyword>
<keyword id="KW-0157">Chromophore</keyword>
<keyword id="KW-0903">Direct protein sequencing</keyword>
<keyword id="KW-0472">Membrane</keyword>
<keyword id="KW-0602">Photosynthesis</keyword>
<keyword id="KW-0604">Photosystem II</keyword>
<keyword id="KW-0934">Plastid</keyword>
<keyword id="KW-0793">Thylakoid</keyword>
<keyword id="KW-0809">Transit peptide</keyword>
<keyword id="KW-0812">Transmembrane</keyword>
<keyword id="KW-1133">Transmembrane helix</keyword>
<feature type="transit peptide" description="Chloroplast" evidence="1">
    <location>
        <begin position="1"/>
        <end position="44"/>
    </location>
</feature>
<feature type="chain" id="PRO_0000458259" description="Chlorophyll a-b binding protein 1, chloroplastic" evidence="1">
    <location>
        <begin position="45"/>
        <end position="307"/>
    </location>
</feature>
<feature type="transmembrane region" description="Helical" evidence="3 6">
    <location>
        <begin position="111"/>
        <end position="143"/>
    </location>
</feature>
<feature type="transmembrane region" description="Helical" evidence="3 6">
    <location>
        <begin position="161"/>
        <end position="186"/>
    </location>
</feature>
<feature type="transmembrane region" description="Helical" evidence="3 6">
    <location>
        <begin position="213"/>
        <end position="238"/>
    </location>
</feature>
<feature type="transmembrane region" description="Helical" evidence="3 6">
    <location>
        <begin position="265"/>
        <end position="289"/>
    </location>
</feature>
<feature type="region of interest" description="Disordered" evidence="2">
    <location>
        <begin position="34"/>
        <end position="54"/>
    </location>
</feature>
<feature type="binding site" evidence="3 6">
    <location>
        <position position="52"/>
    </location>
    <ligand>
        <name>chlorophyll a</name>
        <dbReference type="ChEBI" id="CHEBI:58416"/>
        <label>6</label>
    </ligand>
</feature>
<feature type="binding site" evidence="3 6">
    <location>
        <position position="63"/>
    </location>
    <ligand>
        <name>chlorophyll a</name>
        <dbReference type="ChEBI" id="CHEBI:58416"/>
        <label>7</label>
    </ligand>
</feature>
<feature type="binding site" evidence="3 6">
    <location>
        <position position="64"/>
    </location>
    <ligand>
        <name>chlorophyll a</name>
        <dbReference type="ChEBI" id="CHEBI:58416"/>
        <label>5</label>
    </ligand>
</feature>
<feature type="binding site" evidence="3 6">
    <location>
        <position position="65"/>
    </location>
    <ligand>
        <name>chlorophyll a</name>
        <dbReference type="ChEBI" id="CHEBI:58416"/>
        <label>1</label>
    </ligand>
</feature>
<feature type="binding site" evidence="3 6">
    <location>
        <position position="68"/>
    </location>
    <ligand>
        <name>chlorophyll a</name>
        <dbReference type="ChEBI" id="CHEBI:58416"/>
        <label>1</label>
    </ligand>
</feature>
<feature type="binding site" evidence="3 6">
    <location>
        <position position="81"/>
    </location>
    <ligand>
        <name>chlorophyll a</name>
        <dbReference type="ChEBI" id="CHEBI:58416"/>
        <label>2</label>
    </ligand>
</feature>
<feature type="binding site" evidence="3 6">
    <location>
        <position position="86"/>
    </location>
    <ligand>
        <name>chlorophyll a</name>
        <dbReference type="ChEBI" id="CHEBI:58416"/>
        <label>2</label>
    </ligand>
</feature>
<feature type="binding site" evidence="3 6">
    <location>
        <position position="89"/>
    </location>
    <ligand>
        <name>chlorophyll a</name>
        <dbReference type="ChEBI" id="CHEBI:58416"/>
        <label>1</label>
    </ligand>
</feature>
<feature type="binding site" evidence="3 6">
    <location>
        <position position="90"/>
    </location>
    <ligand>
        <name>chlorophyll a</name>
        <dbReference type="ChEBI" id="CHEBI:58416"/>
        <label>2</label>
    </ligand>
</feature>
<feature type="binding site" evidence="3 6">
    <location>
        <position position="91"/>
    </location>
    <ligand>
        <name>chlorophyll a</name>
        <dbReference type="ChEBI" id="CHEBI:58416"/>
        <label>2</label>
    </ligand>
</feature>
<feature type="binding site" evidence="3 6">
    <location>
        <position position="92"/>
    </location>
    <ligand>
        <name>chlorophyll a</name>
        <dbReference type="ChEBI" id="CHEBI:58416"/>
        <label>2</label>
    </ligand>
</feature>
<feature type="binding site" evidence="3 6">
    <location>
        <position position="96"/>
    </location>
    <ligand>
        <name>loroxanthin</name>
        <dbReference type="ChEBI" id="CHEBI:194487"/>
    </ligand>
</feature>
<feature type="binding site" evidence="3 6">
    <location>
        <position position="120"/>
    </location>
    <ligand>
        <name>chlorophyll a</name>
        <dbReference type="ChEBI" id="CHEBI:58416"/>
        <label>3</label>
    </ligand>
</feature>
<feature type="binding site" evidence="3 6">
    <location>
        <position position="124"/>
    </location>
    <ligand>
        <name>chlorophyll a</name>
        <dbReference type="ChEBI" id="CHEBI:58416"/>
        <label>2</label>
    </ligand>
</feature>
<feature type="binding site" evidence="3 6">
    <location>
        <position position="127"/>
    </location>
    <ligand>
        <name>chlorophyll a</name>
        <dbReference type="ChEBI" id="CHEBI:58416"/>
        <label>5</label>
    </ligand>
</feature>
<feature type="binding site" evidence="3 6">
    <location>
        <position position="132"/>
    </location>
    <ligand>
        <name>chlorophyll a</name>
        <dbReference type="ChEBI" id="CHEBI:58416"/>
        <label>6</label>
    </ligand>
</feature>
<feature type="binding site" evidence="3 6">
    <location>
        <position position="146"/>
    </location>
    <ligand>
        <name>chlorophyll a</name>
        <dbReference type="ChEBI" id="CHEBI:58416"/>
        <label>4</label>
    </ligand>
</feature>
<feature type="binding site" evidence="3 6">
    <location>
        <position position="149"/>
    </location>
    <ligand>
        <name>loroxanthin</name>
        <dbReference type="ChEBI" id="CHEBI:194487"/>
    </ligand>
</feature>
<feature type="binding site" evidence="3 6">
    <location>
        <position position="151"/>
    </location>
    <ligand>
        <name>chlorophyll a</name>
        <dbReference type="ChEBI" id="CHEBI:58416"/>
        <label>10</label>
    </ligand>
</feature>
<feature type="binding site" evidence="3 6">
    <location>
        <position position="163"/>
    </location>
    <ligand>
        <name>chlorophyll a</name>
        <dbReference type="ChEBI" id="CHEBI:58416"/>
        <label>11</label>
    </ligand>
</feature>
<feature type="binding site" evidence="3 6">
    <location>
        <position position="171"/>
    </location>
    <ligand>
        <name>chlorophyll a</name>
        <dbReference type="ChEBI" id="CHEBI:58416"/>
        <label>11</label>
    </ligand>
    <ligandPart>
        <name>Mg</name>
        <dbReference type="ChEBI" id="CHEBI:25107"/>
    </ligandPart>
</feature>
<feature type="binding site" evidence="3 6">
    <location>
        <position position="178"/>
    </location>
    <ligand>
        <name>chlorophyll a</name>
        <dbReference type="ChEBI" id="CHEBI:58416"/>
        <label>5</label>
    </ligand>
</feature>
<feature type="binding site" evidence="3 6">
    <location>
        <position position="181"/>
    </location>
    <ligand>
        <name>chlorophyll a</name>
        <dbReference type="ChEBI" id="CHEBI:58416"/>
        <label>5</label>
    </ligand>
</feature>
<feature type="binding site" evidence="3 6">
    <location>
        <position position="190"/>
    </location>
    <ligand>
        <name>chlorophyll a</name>
        <dbReference type="ChEBI" id="CHEBI:58416"/>
        <label>6</label>
    </ligand>
</feature>
<feature type="binding site" evidence="3 6">
    <location>
        <position position="198"/>
    </location>
    <ligand>
        <name>chlorophyll a</name>
        <dbReference type="ChEBI" id="CHEBI:58416"/>
        <label>6</label>
    </ligand>
</feature>
<feature type="binding site" evidence="3 6">
    <location>
        <position position="200"/>
    </location>
    <ligand>
        <name>all-trans-violaxanthin</name>
        <dbReference type="ChEBI" id="CHEBI:35288"/>
    </ligand>
</feature>
<feature type="binding site" evidence="3 6">
    <location>
        <position position="200"/>
    </location>
    <ligand>
        <name>chlorophyll a</name>
        <dbReference type="ChEBI" id="CHEBI:58416"/>
        <label>6</label>
    </ligand>
</feature>
<feature type="binding site" evidence="3 6">
    <location>
        <position position="202"/>
    </location>
    <ligand>
        <name>all-trans-violaxanthin</name>
        <dbReference type="ChEBI" id="CHEBI:35288"/>
    </ligand>
</feature>
<feature type="binding site" evidence="3 6">
    <location>
        <position position="204"/>
    </location>
    <ligand>
        <name>chlorophyll a</name>
        <dbReference type="ChEBI" id="CHEBI:58416"/>
        <label>6</label>
    </ligand>
</feature>
<feature type="binding site" evidence="3 6">
    <location>
        <position position="208"/>
    </location>
    <ligand>
        <name>chlorophyll a</name>
        <dbReference type="ChEBI" id="CHEBI:58416"/>
        <label>8</label>
    </ligand>
</feature>
<feature type="binding site" evidence="3 6">
    <location>
        <position position="214"/>
    </location>
    <ligand>
        <name>chlorophyll a</name>
        <dbReference type="ChEBI" id="CHEBI:58416"/>
        <label>7</label>
    </ligand>
</feature>
<feature type="binding site" evidence="3 6">
    <location>
        <position position="215"/>
    </location>
    <ligand>
        <name>chlorophyll a</name>
        <dbReference type="ChEBI" id="CHEBI:58416"/>
        <label>8</label>
    </ligand>
</feature>
<feature type="binding site" evidence="3 6">
    <location>
        <position position="218"/>
    </location>
    <ligand>
        <name>chlorophyll a</name>
        <dbReference type="ChEBI" id="CHEBI:58416"/>
        <label>8</label>
    </ligand>
</feature>
<feature type="binding site" evidence="3 6">
    <location>
        <position position="222"/>
    </location>
    <ligand>
        <name>chlorophyll a</name>
        <dbReference type="ChEBI" id="CHEBI:58416"/>
        <label>8</label>
    </ligand>
</feature>
<feature type="binding site" evidence="3 6">
    <location>
        <position position="224"/>
    </location>
    <ligand>
        <name>chlorophyll a</name>
        <dbReference type="ChEBI" id="CHEBI:58416"/>
        <label>2</label>
    </ligand>
</feature>
<feature type="binding site" evidence="3 6">
    <location>
        <position position="230"/>
    </location>
    <ligand>
        <name>loroxanthin</name>
        <dbReference type="ChEBI" id="CHEBI:194487"/>
    </ligand>
</feature>
<feature type="binding site" evidence="3 6">
    <location>
        <position position="233"/>
    </location>
    <ligand>
        <name>all-trans-violaxanthin</name>
        <dbReference type="ChEBI" id="CHEBI:35288"/>
    </ligand>
</feature>
<feature type="binding site" evidence="3 6">
    <location>
        <position position="236"/>
    </location>
    <ligand>
        <name>chlorophyll a</name>
        <dbReference type="ChEBI" id="CHEBI:58416"/>
        <label>9</label>
    </ligand>
</feature>
<feature type="binding site" evidence="3 6">
    <location>
        <position position="244"/>
    </location>
    <ligand>
        <name>all-trans-violaxanthin</name>
        <dbReference type="ChEBI" id="CHEBI:35288"/>
    </ligand>
</feature>
<feature type="binding site" evidence="3 6">
    <location>
        <position position="247"/>
    </location>
    <ligand>
        <name>chlorophyll a</name>
        <dbReference type="ChEBI" id="CHEBI:58416"/>
        <label>9</label>
    </ligand>
</feature>
<feature type="binding site" evidence="3 6">
    <location>
        <position position="251"/>
    </location>
    <ligand>
        <name>chlorophyll a</name>
        <dbReference type="ChEBI" id="CHEBI:58416"/>
        <label>10</label>
    </ligand>
</feature>
<feature type="binding site" evidence="3 6">
    <location>
        <position position="255"/>
    </location>
    <ligand>
        <name>chlorophyll a</name>
        <dbReference type="ChEBI" id="CHEBI:58416"/>
        <label>10</label>
    </ligand>
</feature>
<feature type="binding site" evidence="3 6">
    <location>
        <position position="256"/>
    </location>
    <ligand>
        <name>chlorophyll a</name>
        <dbReference type="ChEBI" id="CHEBI:58416"/>
        <label>10</label>
    </ligand>
</feature>
<feature type="binding site" evidence="3 6">
    <location>
        <position position="258"/>
    </location>
    <ligand>
        <name>chlorophyll a</name>
        <dbReference type="ChEBI" id="CHEBI:58416"/>
        <label>9</label>
    </ligand>
</feature>
<feature type="binding site" evidence="3 6">
    <location>
        <position position="259"/>
    </location>
    <ligand>
        <name>chlorophyll a</name>
        <dbReference type="ChEBI" id="CHEBI:58416"/>
        <label>10</label>
    </ligand>
</feature>
<feature type="binding site" evidence="3 6">
    <location>
        <position position="260"/>
    </location>
    <ligand>
        <name>chlorophyll a</name>
        <dbReference type="ChEBI" id="CHEBI:58416"/>
        <label>9</label>
    </ligand>
</feature>
<feature type="binding site" evidence="3 6">
    <location>
        <position position="274"/>
    </location>
    <ligand>
        <name>chlorophyll a</name>
        <dbReference type="ChEBI" id="CHEBI:58416"/>
        <label>2</label>
    </ligand>
</feature>
<feature type="strand" evidence="8">
    <location>
        <begin position="64"/>
        <end position="70"/>
    </location>
</feature>
<feature type="strand" evidence="8">
    <location>
        <begin position="72"/>
        <end position="74"/>
    </location>
</feature>
<feature type="strand" evidence="8">
    <location>
        <begin position="97"/>
        <end position="100"/>
    </location>
</feature>
<feature type="helix" evidence="8">
    <location>
        <begin position="112"/>
        <end position="142"/>
    </location>
</feature>
<feature type="turn" evidence="8">
    <location>
        <begin position="143"/>
        <end position="145"/>
    </location>
</feature>
<feature type="helix" evidence="8">
    <location>
        <begin position="153"/>
        <end position="155"/>
    </location>
</feature>
<feature type="helix" evidence="8">
    <location>
        <begin position="161"/>
        <end position="185"/>
    </location>
</feature>
<feature type="strand" evidence="8">
    <location>
        <begin position="193"/>
        <end position="198"/>
    </location>
</feature>
<feature type="strand" evidence="8">
    <location>
        <begin position="211"/>
        <end position="214"/>
    </location>
</feature>
<feature type="helix" evidence="8">
    <location>
        <begin position="215"/>
        <end position="239"/>
    </location>
</feature>
<feature type="helix" evidence="8">
    <location>
        <begin position="244"/>
        <end position="253"/>
    </location>
</feature>
<feature type="turn" evidence="8">
    <location>
        <begin position="255"/>
        <end position="257"/>
    </location>
</feature>
<feature type="helix" evidence="8">
    <location>
        <begin position="260"/>
        <end position="262"/>
    </location>
</feature>
<feature type="helix" evidence="8">
    <location>
        <begin position="266"/>
        <end position="278"/>
    </location>
</feature>
<feature type="helix" evidence="8">
    <location>
        <begin position="280"/>
        <end position="289"/>
    </location>
</feature>
<comment type="function">
    <text evidence="3">Component of a light-harvesting complex (LHC) (PubMed:36792917). The LHC functions as a light receptor, it captures and delivers excitation energy to photosystems with which it is closely associated (PubMed:36792917). Functions in a far-red LHC by absorbing far-red light and promoting photosystem II (PSII) excitation, likely with entropy-driven uphill excitation energy transfer (PubMed:36792917). Exhibits a typical absorption band at 671 nm (Qy band), as well as a large far-red absorption band at 706.5 together with fluorescence emission at around 713 nm (F713) (PubMed:36792917).</text>
</comment>
<comment type="cofactor">
    <text evidence="3">Binds 11 chlorophylls (Chl-a and Chl-b) and the 2 carotenoids violaxanthin and loroxanthin.</text>
</comment>
<comment type="subunit">
    <text evidence="3">Homooligomer (PubMed:36792917). Component of a light-harvesting complex (LHC) consisting of 11 chlorophyll a-b binding proteins (PubMed:36792917).</text>
</comment>
<comment type="subcellular location">
    <subcellularLocation>
        <location evidence="3">Plastid</location>
        <location evidence="3">Chloroplast thylakoid membrane</location>
        <topology evidence="1">Multi-pass membrane protein</topology>
    </subcellularLocation>
</comment>
<comment type="similarity">
    <text evidence="5">Belongs to the light-harvesting chlorophyll a/b-binding (LHC) protein family.</text>
</comment>
<sequence length="307" mass="33462">MAPYSVVASVLAAAPPQQSGSVRQLPSTINRAITQRSQSRHVASASSASSPTTMLEERDNLWEIGGPYWWPFSSFTPPAHLDGSLPGDRGFDPFSLGTSWGQPPVDVSDPNYDESRLRWLLEGELYNGRLAMLAVVGVLTVEAQGKGPWWEIPGNLNLFGTPYVVAVVGGHLAFALLEKKRLENFRETGEAGHFGAARFDPLDLTEANPLGTDYNRQAEVRNCRLAMLTFLGFSVQAWVTGKGPIENAKDHLASPFEANIFTYGDRGTNVVAIFSAFAAVMHIAELAREKKAEDKPRSRNRTLSGSS</sequence>
<reference evidence="7" key="1">
    <citation type="journal article" date="2023" name="Nat. Commun.">
        <title>Uphill energy transfer mechanism for photosynthesis in an Antarctic alga.</title>
        <authorList>
            <person name="Kosugi M."/>
            <person name="Kawasaki M."/>
            <person name="Shibata Y."/>
            <person name="Hara K."/>
            <person name="Takaichi S."/>
            <person name="Moriya T."/>
            <person name="Adachi N."/>
            <person name="Kamei Y."/>
            <person name="Kashino Y."/>
            <person name="Kudoh S."/>
            <person name="Koike H."/>
            <person name="Senda T."/>
        </authorList>
    </citation>
    <scope>NUCLEOTIDE SEQUENCE [MRNA]</scope>
    <scope>PROTEIN SEQUENCE OF 265-311; 433-445 AND 501-527</scope>
    <scope>STRUCTURE BY ELECTRON MICROSCOPY (3.13 ANGSTROMS) IN COMPLEX WITH CHLOROPHYLL A</scope>
    <scope>FUNCTION</scope>
    <scope>COFACTOR</scope>
    <scope>SUBUNIT</scope>
    <scope>IDENTIFICATION IN THE LHC COMPLEX</scope>
    <scope>SUBCELLULAR LOCATION</scope>
</reference>
<accession>C0HLU5</accession>
<organism>
    <name type="scientific">Prasiola crispa</name>
    <name type="common">Green alga</name>
    <name type="synonym">Ulva crispa</name>
    <dbReference type="NCBI Taxonomy" id="173492"/>
    <lineage>
        <taxon>Eukaryota</taxon>
        <taxon>Viridiplantae</taxon>
        <taxon>Chlorophyta</taxon>
        <taxon>core chlorophytes</taxon>
        <taxon>Trebouxiophyceae</taxon>
        <taxon>Prasiolales</taxon>
        <taxon>Prasiolaceae</taxon>
        <taxon>Prasiola</taxon>
    </lineage>
</organism>
<evidence type="ECO:0000255" key="1"/>
<evidence type="ECO:0000256" key="2">
    <source>
        <dbReference type="SAM" id="MobiDB-lite"/>
    </source>
</evidence>
<evidence type="ECO:0000269" key="3">
    <source>
    </source>
</evidence>
<evidence type="ECO:0000303" key="4">
    <source>
    </source>
</evidence>
<evidence type="ECO:0000305" key="5"/>
<evidence type="ECO:0000312" key="6">
    <source>
        <dbReference type="PDB" id="8HW1"/>
    </source>
</evidence>
<evidence type="ECO:0007744" key="7">
    <source>
        <dbReference type="PDB" id="8HW1"/>
    </source>
</evidence>
<evidence type="ECO:0007829" key="8">
    <source>
        <dbReference type="PDB" id="8HW1"/>
    </source>
</evidence>
<name>CAB1_PRACR</name>
<dbReference type="PDB" id="8HW1">
    <property type="method" value="EM"/>
    <property type="resolution" value="3.13 A"/>
    <property type="chains" value="A/B/C/D/E/F/G/H/I/J/K=1-307"/>
</dbReference>
<dbReference type="PDBsum" id="8HW1"/>
<dbReference type="SMR" id="C0HLU5"/>
<dbReference type="GO" id="GO:0009535">
    <property type="term" value="C:chloroplast thylakoid membrane"/>
    <property type="evidence" value="ECO:0007669"/>
    <property type="project" value="UniProtKB-SubCell"/>
</dbReference>
<dbReference type="GO" id="GO:0009523">
    <property type="term" value="C:photosystem II"/>
    <property type="evidence" value="ECO:0007669"/>
    <property type="project" value="UniProtKB-KW"/>
</dbReference>
<dbReference type="GO" id="GO:0016168">
    <property type="term" value="F:chlorophyll binding"/>
    <property type="evidence" value="ECO:0007669"/>
    <property type="project" value="UniProtKB-KW"/>
</dbReference>
<dbReference type="GO" id="GO:0009765">
    <property type="term" value="P:photosynthesis, light harvesting"/>
    <property type="evidence" value="ECO:0007669"/>
    <property type="project" value="InterPro"/>
</dbReference>
<dbReference type="Gene3D" id="1.10.3460.10">
    <property type="entry name" value="Chlorophyll a/b binding protein domain"/>
    <property type="match status" value="1"/>
</dbReference>
<dbReference type="InterPro" id="IPR001344">
    <property type="entry name" value="Chloro_AB-bd_pln"/>
</dbReference>
<dbReference type="InterPro" id="IPR022796">
    <property type="entry name" value="Chloroa_b-bind"/>
</dbReference>
<dbReference type="PANTHER" id="PTHR21649">
    <property type="entry name" value="CHLOROPHYLL A/B BINDING PROTEIN"/>
    <property type="match status" value="1"/>
</dbReference>
<dbReference type="Pfam" id="PF00504">
    <property type="entry name" value="Chloroa_b-bind"/>
    <property type="match status" value="1"/>
</dbReference>
<dbReference type="SUPFAM" id="SSF103511">
    <property type="entry name" value="Chlorophyll a-b binding protein"/>
    <property type="match status" value="1"/>
</dbReference>
<protein>
    <recommendedName>
        <fullName evidence="5">Chlorophyll a-b binding protein 1, chloroplastic</fullName>
    </recommendedName>
    <alternativeName>
        <fullName evidence="4">Far-red light-harvesting complex protein</fullName>
        <shortName evidence="4">frLHCP</shortName>
    </alternativeName>
</protein>
<proteinExistence type="evidence at protein level"/>